<accession>A6QCS2</accession>
<dbReference type="EMBL" id="AP009179">
    <property type="protein sequence ID" value="BAF73281.1"/>
    <property type="molecule type" value="Genomic_DNA"/>
</dbReference>
<dbReference type="RefSeq" id="WP_012084120.1">
    <property type="nucleotide sequence ID" value="NC_009663.1"/>
</dbReference>
<dbReference type="SMR" id="A6QCS2"/>
<dbReference type="STRING" id="387093.SUN_2345"/>
<dbReference type="KEGG" id="sun:SUN_2345"/>
<dbReference type="eggNOG" id="COG0100">
    <property type="taxonomic scope" value="Bacteria"/>
</dbReference>
<dbReference type="HOGENOM" id="CLU_072439_5_0_7"/>
<dbReference type="OrthoDB" id="9806415at2"/>
<dbReference type="Proteomes" id="UP000006378">
    <property type="component" value="Chromosome"/>
</dbReference>
<dbReference type="GO" id="GO:1990904">
    <property type="term" value="C:ribonucleoprotein complex"/>
    <property type="evidence" value="ECO:0007669"/>
    <property type="project" value="UniProtKB-KW"/>
</dbReference>
<dbReference type="GO" id="GO:0005840">
    <property type="term" value="C:ribosome"/>
    <property type="evidence" value="ECO:0007669"/>
    <property type="project" value="UniProtKB-KW"/>
</dbReference>
<dbReference type="GO" id="GO:0019843">
    <property type="term" value="F:rRNA binding"/>
    <property type="evidence" value="ECO:0007669"/>
    <property type="project" value="UniProtKB-UniRule"/>
</dbReference>
<dbReference type="GO" id="GO:0003735">
    <property type="term" value="F:structural constituent of ribosome"/>
    <property type="evidence" value="ECO:0007669"/>
    <property type="project" value="InterPro"/>
</dbReference>
<dbReference type="GO" id="GO:0006412">
    <property type="term" value="P:translation"/>
    <property type="evidence" value="ECO:0007669"/>
    <property type="project" value="UniProtKB-UniRule"/>
</dbReference>
<dbReference type="Gene3D" id="3.30.420.80">
    <property type="entry name" value="Ribosomal protein S11"/>
    <property type="match status" value="1"/>
</dbReference>
<dbReference type="HAMAP" id="MF_01310">
    <property type="entry name" value="Ribosomal_uS11"/>
    <property type="match status" value="1"/>
</dbReference>
<dbReference type="InterPro" id="IPR001971">
    <property type="entry name" value="Ribosomal_uS11"/>
</dbReference>
<dbReference type="InterPro" id="IPR019981">
    <property type="entry name" value="Ribosomal_uS11_bac-type"/>
</dbReference>
<dbReference type="InterPro" id="IPR018102">
    <property type="entry name" value="Ribosomal_uS11_CS"/>
</dbReference>
<dbReference type="InterPro" id="IPR036967">
    <property type="entry name" value="Ribosomal_uS11_sf"/>
</dbReference>
<dbReference type="NCBIfam" id="NF003698">
    <property type="entry name" value="PRK05309.1"/>
    <property type="match status" value="1"/>
</dbReference>
<dbReference type="NCBIfam" id="TIGR03632">
    <property type="entry name" value="uS11_bact"/>
    <property type="match status" value="1"/>
</dbReference>
<dbReference type="PANTHER" id="PTHR11759">
    <property type="entry name" value="40S RIBOSOMAL PROTEIN S14/30S RIBOSOMAL PROTEIN S11"/>
    <property type="match status" value="1"/>
</dbReference>
<dbReference type="Pfam" id="PF00411">
    <property type="entry name" value="Ribosomal_S11"/>
    <property type="match status" value="1"/>
</dbReference>
<dbReference type="PIRSF" id="PIRSF002131">
    <property type="entry name" value="Ribosomal_S11"/>
    <property type="match status" value="1"/>
</dbReference>
<dbReference type="SUPFAM" id="SSF53137">
    <property type="entry name" value="Translational machinery components"/>
    <property type="match status" value="1"/>
</dbReference>
<dbReference type="PROSITE" id="PS00054">
    <property type="entry name" value="RIBOSOMAL_S11"/>
    <property type="match status" value="1"/>
</dbReference>
<evidence type="ECO:0000255" key="1">
    <source>
        <dbReference type="HAMAP-Rule" id="MF_01310"/>
    </source>
</evidence>
<evidence type="ECO:0000305" key="2"/>
<proteinExistence type="inferred from homology"/>
<organism>
    <name type="scientific">Sulfurovum sp. (strain NBC37-1)</name>
    <dbReference type="NCBI Taxonomy" id="387093"/>
    <lineage>
        <taxon>Bacteria</taxon>
        <taxon>Pseudomonadati</taxon>
        <taxon>Campylobacterota</taxon>
        <taxon>Epsilonproteobacteria</taxon>
        <taxon>Campylobacterales</taxon>
        <taxon>Sulfurovaceae</taxon>
        <taxon>Sulfurovum</taxon>
    </lineage>
</organism>
<name>RS11_SULNB</name>
<protein>
    <recommendedName>
        <fullName evidence="1">Small ribosomal subunit protein uS11</fullName>
    </recommendedName>
    <alternativeName>
        <fullName evidence="2">30S ribosomal protein S11</fullName>
    </alternativeName>
</protein>
<reference key="1">
    <citation type="journal article" date="2007" name="Proc. Natl. Acad. Sci. U.S.A.">
        <title>Deep-sea vent epsilon-proteobacterial genomes provide insights into emergence of pathogens.</title>
        <authorList>
            <person name="Nakagawa S."/>
            <person name="Takaki Y."/>
            <person name="Shimamura S."/>
            <person name="Reysenbach A.-L."/>
            <person name="Takai K."/>
            <person name="Horikoshi K."/>
        </authorList>
    </citation>
    <scope>NUCLEOTIDE SEQUENCE [LARGE SCALE GENOMIC DNA]</scope>
    <source>
        <strain>NBC37-1</strain>
    </source>
</reference>
<gene>
    <name evidence="1" type="primary">rpsK</name>
    <name type="ordered locus">SUN_2345</name>
</gene>
<comment type="function">
    <text evidence="1">Located on the platform of the 30S subunit, it bridges several disparate RNA helices of the 16S rRNA. Forms part of the Shine-Dalgarno cleft in the 70S ribosome.</text>
</comment>
<comment type="subunit">
    <text evidence="1">Part of the 30S ribosomal subunit. Interacts with proteins S7 and S18. Binds to IF-3.</text>
</comment>
<comment type="similarity">
    <text evidence="1">Belongs to the universal ribosomal protein uS11 family.</text>
</comment>
<sequence length="124" mass="12942">MAKKKAKKSIAKGVVYVAATFNNTVITVTDEMGNVISWSSAGALGFKGSKKSTPFAATEAVADAMAKAKENGIKEVGIKVQGPGSGRDTAVKAIGATEGIRVTFLKDITPLPHNGCRPPKKRRV</sequence>
<keyword id="KW-0687">Ribonucleoprotein</keyword>
<keyword id="KW-0689">Ribosomal protein</keyword>
<keyword id="KW-0694">RNA-binding</keyword>
<keyword id="KW-0699">rRNA-binding</keyword>
<feature type="chain" id="PRO_0000323346" description="Small ribosomal subunit protein uS11">
    <location>
        <begin position="1"/>
        <end position="124"/>
    </location>
</feature>